<evidence type="ECO:0000250" key="1"/>
<evidence type="ECO:0000255" key="2">
    <source>
        <dbReference type="HAMAP-Rule" id="MF_00514"/>
    </source>
</evidence>
<evidence type="ECO:0000256" key="3">
    <source>
        <dbReference type="SAM" id="MobiDB-lite"/>
    </source>
</evidence>
<evidence type="ECO:0000305" key="4"/>
<accession>P0A492</accession>
<accession>O53085</accession>
<gene>
    <name evidence="2" type="primary">rpmI</name>
    <name type="ordered locus">lin1896</name>
</gene>
<dbReference type="EMBL" id="AL596170">
    <property type="protein sequence ID" value="CAC97126.1"/>
    <property type="molecule type" value="Genomic_DNA"/>
</dbReference>
<dbReference type="PIR" id="AF1669">
    <property type="entry name" value="AF1669"/>
</dbReference>
<dbReference type="RefSeq" id="WP_003720098.1">
    <property type="nucleotide sequence ID" value="NC_003212.1"/>
</dbReference>
<dbReference type="SMR" id="P0A492"/>
<dbReference type="STRING" id="272626.gene:17566254"/>
<dbReference type="GeneID" id="93239693"/>
<dbReference type="KEGG" id="lin:rpmI"/>
<dbReference type="eggNOG" id="COG0291">
    <property type="taxonomic scope" value="Bacteria"/>
</dbReference>
<dbReference type="HOGENOM" id="CLU_169643_3_0_9"/>
<dbReference type="OrthoDB" id="47476at2"/>
<dbReference type="Proteomes" id="UP000002513">
    <property type="component" value="Chromosome"/>
</dbReference>
<dbReference type="GO" id="GO:0022625">
    <property type="term" value="C:cytosolic large ribosomal subunit"/>
    <property type="evidence" value="ECO:0007669"/>
    <property type="project" value="TreeGrafter"/>
</dbReference>
<dbReference type="GO" id="GO:0003735">
    <property type="term" value="F:structural constituent of ribosome"/>
    <property type="evidence" value="ECO:0007669"/>
    <property type="project" value="InterPro"/>
</dbReference>
<dbReference type="GO" id="GO:0006412">
    <property type="term" value="P:translation"/>
    <property type="evidence" value="ECO:0007669"/>
    <property type="project" value="UniProtKB-UniRule"/>
</dbReference>
<dbReference type="FunFam" id="4.10.410.60:FF:000001">
    <property type="entry name" value="50S ribosomal protein L35"/>
    <property type="match status" value="1"/>
</dbReference>
<dbReference type="Gene3D" id="4.10.410.60">
    <property type="match status" value="1"/>
</dbReference>
<dbReference type="HAMAP" id="MF_00514">
    <property type="entry name" value="Ribosomal_bL35"/>
    <property type="match status" value="1"/>
</dbReference>
<dbReference type="InterPro" id="IPR001706">
    <property type="entry name" value="Ribosomal_bL35"/>
</dbReference>
<dbReference type="InterPro" id="IPR021137">
    <property type="entry name" value="Ribosomal_bL35-like"/>
</dbReference>
<dbReference type="InterPro" id="IPR018265">
    <property type="entry name" value="Ribosomal_bL35_CS"/>
</dbReference>
<dbReference type="InterPro" id="IPR037229">
    <property type="entry name" value="Ribosomal_bL35_sf"/>
</dbReference>
<dbReference type="NCBIfam" id="TIGR00001">
    <property type="entry name" value="rpmI_bact"/>
    <property type="match status" value="1"/>
</dbReference>
<dbReference type="PANTHER" id="PTHR33343">
    <property type="entry name" value="54S RIBOSOMAL PROTEIN BL35M"/>
    <property type="match status" value="1"/>
</dbReference>
<dbReference type="PANTHER" id="PTHR33343:SF1">
    <property type="entry name" value="LARGE RIBOSOMAL SUBUNIT PROTEIN BL35M"/>
    <property type="match status" value="1"/>
</dbReference>
<dbReference type="Pfam" id="PF01632">
    <property type="entry name" value="Ribosomal_L35p"/>
    <property type="match status" value="1"/>
</dbReference>
<dbReference type="PRINTS" id="PR00064">
    <property type="entry name" value="RIBOSOMALL35"/>
</dbReference>
<dbReference type="SUPFAM" id="SSF143034">
    <property type="entry name" value="L35p-like"/>
    <property type="match status" value="1"/>
</dbReference>
<dbReference type="PROSITE" id="PS00936">
    <property type="entry name" value="RIBOSOMAL_L35"/>
    <property type="match status" value="1"/>
</dbReference>
<organism>
    <name type="scientific">Listeria innocua serovar 6a (strain ATCC BAA-680 / CLIP 11262)</name>
    <dbReference type="NCBI Taxonomy" id="272626"/>
    <lineage>
        <taxon>Bacteria</taxon>
        <taxon>Bacillati</taxon>
        <taxon>Bacillota</taxon>
        <taxon>Bacilli</taxon>
        <taxon>Bacillales</taxon>
        <taxon>Listeriaceae</taxon>
        <taxon>Listeria</taxon>
    </lineage>
</organism>
<feature type="initiator methionine" description="Removed" evidence="1">
    <location>
        <position position="1"/>
    </location>
</feature>
<feature type="chain" id="PRO_0000177375" description="Large ribosomal subunit protein bL35">
    <location>
        <begin position="2"/>
        <end position="66"/>
    </location>
</feature>
<feature type="region of interest" description="Disordered" evidence="3">
    <location>
        <begin position="1"/>
        <end position="50"/>
    </location>
</feature>
<feature type="compositionally biased region" description="Basic residues" evidence="3">
    <location>
        <begin position="1"/>
        <end position="28"/>
    </location>
</feature>
<protein>
    <recommendedName>
        <fullName evidence="2">Large ribosomal subunit protein bL35</fullName>
    </recommendedName>
    <alternativeName>
        <fullName evidence="4">50S ribosomal protein L35</fullName>
    </alternativeName>
</protein>
<keyword id="KW-0687">Ribonucleoprotein</keyword>
<keyword id="KW-0689">Ribosomal protein</keyword>
<name>RL35_LISIN</name>
<comment type="similarity">
    <text evidence="2">Belongs to the bacterial ribosomal protein bL35 family.</text>
</comment>
<proteinExistence type="inferred from homology"/>
<sequence>MPKMKTHRGSAKRFKRTGSGKLKRRHGFTSHMFANKSQKQKRKLRKSAMVSAGDFKRIRQMVAKMK</sequence>
<reference key="1">
    <citation type="journal article" date="2001" name="Science">
        <title>Comparative genomics of Listeria species.</title>
        <authorList>
            <person name="Glaser P."/>
            <person name="Frangeul L."/>
            <person name="Buchrieser C."/>
            <person name="Rusniok C."/>
            <person name="Amend A."/>
            <person name="Baquero F."/>
            <person name="Berche P."/>
            <person name="Bloecker H."/>
            <person name="Brandt P."/>
            <person name="Chakraborty T."/>
            <person name="Charbit A."/>
            <person name="Chetouani F."/>
            <person name="Couve E."/>
            <person name="de Daruvar A."/>
            <person name="Dehoux P."/>
            <person name="Domann E."/>
            <person name="Dominguez-Bernal G."/>
            <person name="Duchaud E."/>
            <person name="Durant L."/>
            <person name="Dussurget O."/>
            <person name="Entian K.-D."/>
            <person name="Fsihi H."/>
            <person name="Garcia-del Portillo F."/>
            <person name="Garrido P."/>
            <person name="Gautier L."/>
            <person name="Goebel W."/>
            <person name="Gomez-Lopez N."/>
            <person name="Hain T."/>
            <person name="Hauf J."/>
            <person name="Jackson D."/>
            <person name="Jones L.-M."/>
            <person name="Kaerst U."/>
            <person name="Kreft J."/>
            <person name="Kuhn M."/>
            <person name="Kunst F."/>
            <person name="Kurapkat G."/>
            <person name="Madueno E."/>
            <person name="Maitournam A."/>
            <person name="Mata Vicente J."/>
            <person name="Ng E."/>
            <person name="Nedjari H."/>
            <person name="Nordsiek G."/>
            <person name="Novella S."/>
            <person name="de Pablos B."/>
            <person name="Perez-Diaz J.-C."/>
            <person name="Purcell R."/>
            <person name="Remmel B."/>
            <person name="Rose M."/>
            <person name="Schlueter T."/>
            <person name="Simoes N."/>
            <person name="Tierrez A."/>
            <person name="Vazquez-Boland J.-A."/>
            <person name="Voss H."/>
            <person name="Wehland J."/>
            <person name="Cossart P."/>
        </authorList>
    </citation>
    <scope>NUCLEOTIDE SEQUENCE [LARGE SCALE GENOMIC DNA]</scope>
    <source>
        <strain>ATCC BAA-680 / CLIP 11262</strain>
    </source>
</reference>